<evidence type="ECO:0000250" key="1"/>
<evidence type="ECO:0000255" key="2">
    <source>
        <dbReference type="PROSITE-ProRule" id="PRU00711"/>
    </source>
</evidence>
<evidence type="ECO:0000256" key="3">
    <source>
        <dbReference type="SAM" id="MobiDB-lite"/>
    </source>
</evidence>
<evidence type="ECO:0000269" key="4">
    <source>
    </source>
</evidence>
<evidence type="ECO:0000269" key="5">
    <source>
    </source>
</evidence>
<evidence type="ECO:0000305" key="6"/>
<protein>
    <recommendedName>
        <fullName>Anaerobic dimethyl sulfoxide reductase chain B</fullName>
    </recommendedName>
    <alternativeName>
        <fullName>DMSO reductase iron-sulfur subunit</fullName>
    </alternativeName>
</protein>
<sequence>MTTQYGFFIDSSRCTGCKTCELACKDYKDLTPEVSFRRIYEYAGGDWQEDNGVWHQNVFAYYLSISCNHCEDPACTKVCPSGAMHKREDGFVVVDEDVCIGCRYCHMACPYGAPQYNETKGHMTKCDGCYDRVAEGKKPICVESCPLRALDFGPIDELRKKHGDLAAVAPLPRAHFTKPNIVIKPNANSRPTGDTTGYLANPKEV</sequence>
<dbReference type="EMBL" id="J03412">
    <property type="protein sequence ID" value="AAA83844.1"/>
    <property type="molecule type" value="Genomic_DNA"/>
</dbReference>
<dbReference type="EMBL" id="U00096">
    <property type="protein sequence ID" value="AAC73981.1"/>
    <property type="molecule type" value="Genomic_DNA"/>
</dbReference>
<dbReference type="EMBL" id="AP009048">
    <property type="protein sequence ID" value="BAA35627.1"/>
    <property type="molecule type" value="Genomic_DNA"/>
</dbReference>
<dbReference type="PIR" id="F64828">
    <property type="entry name" value="F64828"/>
</dbReference>
<dbReference type="RefSeq" id="NP_415415.1">
    <property type="nucleotide sequence ID" value="NC_000913.3"/>
</dbReference>
<dbReference type="RefSeq" id="WP_000213098.1">
    <property type="nucleotide sequence ID" value="NZ_STEB01000006.1"/>
</dbReference>
<dbReference type="SMR" id="P18776"/>
<dbReference type="BioGRID" id="4260726">
    <property type="interactions" value="6"/>
</dbReference>
<dbReference type="BioGRID" id="849881">
    <property type="interactions" value="2"/>
</dbReference>
<dbReference type="ComplexPortal" id="CPX-320">
    <property type="entry name" value="DmaABC DMSO reductase complex"/>
</dbReference>
<dbReference type="DIP" id="DIP-9453N"/>
<dbReference type="FunCoup" id="P18776">
    <property type="interactions" value="40"/>
</dbReference>
<dbReference type="IntAct" id="P18776">
    <property type="interactions" value="6"/>
</dbReference>
<dbReference type="STRING" id="511145.b0895"/>
<dbReference type="TCDB" id="5.A.3.3.2">
    <property type="family name" value="the prokaryotic molybdopterin-containing oxidoreductase (pmo) family"/>
</dbReference>
<dbReference type="jPOST" id="P18776"/>
<dbReference type="PaxDb" id="511145-b0895"/>
<dbReference type="EnsemblBacteria" id="AAC73981">
    <property type="protein sequence ID" value="AAC73981"/>
    <property type="gene ID" value="b0895"/>
</dbReference>
<dbReference type="GeneID" id="93776525"/>
<dbReference type="GeneID" id="945507"/>
<dbReference type="KEGG" id="ecj:JW0878"/>
<dbReference type="KEGG" id="eco:b0895"/>
<dbReference type="KEGG" id="ecoc:C3026_05535"/>
<dbReference type="PATRIC" id="fig|1411691.4.peg.1382"/>
<dbReference type="EchoBASE" id="EB0229"/>
<dbReference type="eggNOG" id="COG0437">
    <property type="taxonomic scope" value="Bacteria"/>
</dbReference>
<dbReference type="HOGENOM" id="CLU_043374_2_0_6"/>
<dbReference type="InParanoid" id="P18776"/>
<dbReference type="OMA" id="KHARPSG"/>
<dbReference type="OrthoDB" id="9779457at2"/>
<dbReference type="PhylomeDB" id="P18776"/>
<dbReference type="BioCyc" id="EcoCyc:DMSB-MONOMER"/>
<dbReference type="BioCyc" id="MetaCyc:DMSB-MONOMER"/>
<dbReference type="PRO" id="PR:P18776"/>
<dbReference type="Proteomes" id="UP000000625">
    <property type="component" value="Chromosome"/>
</dbReference>
<dbReference type="GO" id="GO:0009390">
    <property type="term" value="C:dimethyl sulfoxide reductase complex"/>
    <property type="evidence" value="ECO:0000314"/>
    <property type="project" value="EcoCyc"/>
</dbReference>
<dbReference type="GO" id="GO:0005886">
    <property type="term" value="C:plasma membrane"/>
    <property type="evidence" value="ECO:0000314"/>
    <property type="project" value="ComplexPortal"/>
</dbReference>
<dbReference type="GO" id="GO:0051539">
    <property type="term" value="F:4 iron, 4 sulfur cluster binding"/>
    <property type="evidence" value="ECO:0000314"/>
    <property type="project" value="EcoCyc"/>
</dbReference>
<dbReference type="GO" id="GO:0009389">
    <property type="term" value="F:dimethyl sulfoxide reductase activity"/>
    <property type="evidence" value="ECO:0000314"/>
    <property type="project" value="EcoCyc"/>
</dbReference>
<dbReference type="GO" id="GO:0046872">
    <property type="term" value="F:metal ion binding"/>
    <property type="evidence" value="ECO:0007669"/>
    <property type="project" value="UniProtKB-KW"/>
</dbReference>
<dbReference type="GO" id="GO:0019645">
    <property type="term" value="P:anaerobic electron transport chain"/>
    <property type="evidence" value="ECO:0000314"/>
    <property type="project" value="ComplexPortal"/>
</dbReference>
<dbReference type="GO" id="GO:0009061">
    <property type="term" value="P:anaerobic respiration"/>
    <property type="evidence" value="ECO:0000270"/>
    <property type="project" value="EcoCyc"/>
</dbReference>
<dbReference type="GO" id="GO:0018907">
    <property type="term" value="P:dimethyl sulfoxide metabolic process"/>
    <property type="evidence" value="ECO:0000314"/>
    <property type="project" value="ComplexPortal"/>
</dbReference>
<dbReference type="CDD" id="cd16371">
    <property type="entry name" value="DMSOR_beta_like"/>
    <property type="match status" value="1"/>
</dbReference>
<dbReference type="FunFam" id="3.30.70.20:FF:000003">
    <property type="entry name" value="Dimethyl sulfoxide reductase subunit B"/>
    <property type="match status" value="1"/>
</dbReference>
<dbReference type="Gene3D" id="3.30.70.20">
    <property type="match status" value="2"/>
</dbReference>
<dbReference type="InterPro" id="IPR017896">
    <property type="entry name" value="4Fe4S_Fe-S-bd"/>
</dbReference>
<dbReference type="InterPro" id="IPR017900">
    <property type="entry name" value="4Fe4S_Fe_S_CS"/>
</dbReference>
<dbReference type="InterPro" id="IPR014297">
    <property type="entry name" value="DMSO_DmsB"/>
</dbReference>
<dbReference type="InterPro" id="IPR050954">
    <property type="entry name" value="ET_IronSulfur_Cluster-Binding"/>
</dbReference>
<dbReference type="NCBIfam" id="TIGR02951">
    <property type="entry name" value="DMSO_dmsB"/>
    <property type="match status" value="1"/>
</dbReference>
<dbReference type="PANTHER" id="PTHR43177:SF5">
    <property type="entry name" value="ANAEROBIC DIMETHYL SULFOXIDE REDUCTASE CHAIN B-RELATED"/>
    <property type="match status" value="1"/>
</dbReference>
<dbReference type="PANTHER" id="PTHR43177">
    <property type="entry name" value="PROTEIN NRFC"/>
    <property type="match status" value="1"/>
</dbReference>
<dbReference type="Pfam" id="PF13247">
    <property type="entry name" value="Fer4_11"/>
    <property type="match status" value="1"/>
</dbReference>
<dbReference type="Pfam" id="PF12797">
    <property type="entry name" value="Fer4_2"/>
    <property type="match status" value="1"/>
</dbReference>
<dbReference type="SUPFAM" id="SSF54862">
    <property type="entry name" value="4Fe-4S ferredoxins"/>
    <property type="match status" value="1"/>
</dbReference>
<dbReference type="PROSITE" id="PS00198">
    <property type="entry name" value="4FE4S_FER_1"/>
    <property type="match status" value="1"/>
</dbReference>
<dbReference type="PROSITE" id="PS51379">
    <property type="entry name" value="4FE4S_FER_2"/>
    <property type="match status" value="3"/>
</dbReference>
<organism>
    <name type="scientific">Escherichia coli (strain K12)</name>
    <dbReference type="NCBI Taxonomy" id="83333"/>
    <lineage>
        <taxon>Bacteria</taxon>
        <taxon>Pseudomonadati</taxon>
        <taxon>Pseudomonadota</taxon>
        <taxon>Gammaproteobacteria</taxon>
        <taxon>Enterobacterales</taxon>
        <taxon>Enterobacteriaceae</taxon>
        <taxon>Escherichia</taxon>
    </lineage>
</organism>
<proteinExistence type="evidence at protein level"/>
<name>DMSB_ECOLI</name>
<comment type="function">
    <text>Electron transfer subunit of the terminal reductase during anaerobic growth on various sulfoxide and N-oxide compounds.</text>
</comment>
<comment type="cofactor">
    <cofactor>
        <name>[4Fe-4S] cluster</name>
        <dbReference type="ChEBI" id="CHEBI:49883"/>
    </cofactor>
    <text>Binds 4 [4Fe-4S] clusters.</text>
</comment>
<comment type="subunit">
    <text>Heterotrimeric enzyme composed of a catalytic heterodimer (DmsAB) and a membrane anchor protein (DmsC).</text>
</comment>
<comment type="interaction">
    <interactant intactId="EBI-1120825">
        <id>P18776</id>
    </interactant>
    <interactant intactId="EBI-4411104">
        <id>P18775</id>
        <label>dmsA</label>
    </interactant>
    <organismsDiffer>false</organismsDiffer>
    <experiments>2</experiments>
</comment>
<accession>P18776</accession>
<accession>P77745</accession>
<reference key="1">
    <citation type="journal article" date="1988" name="Mol. Microbiol.">
        <title>Nucleotide sequence of the dmsABC operon encoding the anaerobic dimethylsulphoxide reductase of Escherichia coli.</title>
        <authorList>
            <person name="Bilous P.T."/>
            <person name="Cole S.T."/>
            <person name="Anderson W.F."/>
            <person name="Weiner J.H."/>
        </authorList>
    </citation>
    <scope>NUCLEOTIDE SEQUENCE [GENOMIC DNA]</scope>
    <scope>PROTEIN SEQUENCE OF 2-10</scope>
    <source>
        <strain>K12 / C600 / CR34 / ATCC 23724 / DSM 3925 / LMG 3041 / NCIB 10222</strain>
    </source>
</reference>
<reference key="2">
    <citation type="journal article" date="1996" name="DNA Res.">
        <title>A 718-kb DNA sequence of the Escherichia coli K-12 genome corresponding to the 12.7-28.0 min region on the linkage map.</title>
        <authorList>
            <person name="Oshima T."/>
            <person name="Aiba H."/>
            <person name="Baba T."/>
            <person name="Fujita K."/>
            <person name="Hayashi K."/>
            <person name="Honjo A."/>
            <person name="Ikemoto K."/>
            <person name="Inada T."/>
            <person name="Itoh T."/>
            <person name="Kajihara M."/>
            <person name="Kanai K."/>
            <person name="Kashimoto K."/>
            <person name="Kimura S."/>
            <person name="Kitagawa M."/>
            <person name="Makino K."/>
            <person name="Masuda S."/>
            <person name="Miki T."/>
            <person name="Mizobuchi K."/>
            <person name="Mori H."/>
            <person name="Motomura K."/>
            <person name="Nakamura Y."/>
            <person name="Nashimoto H."/>
            <person name="Nishio Y."/>
            <person name="Saito N."/>
            <person name="Sampei G."/>
            <person name="Seki Y."/>
            <person name="Tagami H."/>
            <person name="Takemoto K."/>
            <person name="Wada C."/>
            <person name="Yamamoto Y."/>
            <person name="Yano M."/>
            <person name="Horiuchi T."/>
        </authorList>
    </citation>
    <scope>NUCLEOTIDE SEQUENCE [LARGE SCALE GENOMIC DNA]</scope>
    <source>
        <strain>K12 / W3110 / ATCC 27325 / DSM 5911</strain>
    </source>
</reference>
<reference key="3">
    <citation type="journal article" date="1997" name="Science">
        <title>The complete genome sequence of Escherichia coli K-12.</title>
        <authorList>
            <person name="Blattner F.R."/>
            <person name="Plunkett G. III"/>
            <person name="Bloch C.A."/>
            <person name="Perna N.T."/>
            <person name="Burland V."/>
            <person name="Riley M."/>
            <person name="Collado-Vides J."/>
            <person name="Glasner J.D."/>
            <person name="Rode C.K."/>
            <person name="Mayhew G.F."/>
            <person name="Gregor J."/>
            <person name="Davis N.W."/>
            <person name="Kirkpatrick H.A."/>
            <person name="Goeden M.A."/>
            <person name="Rose D.J."/>
            <person name="Mau B."/>
            <person name="Shao Y."/>
        </authorList>
    </citation>
    <scope>NUCLEOTIDE SEQUENCE [LARGE SCALE GENOMIC DNA]</scope>
    <source>
        <strain>K12 / MG1655 / ATCC 47076</strain>
    </source>
</reference>
<reference key="4">
    <citation type="journal article" date="2006" name="Mol. Syst. Biol.">
        <title>Highly accurate genome sequences of Escherichia coli K-12 strains MG1655 and W3110.</title>
        <authorList>
            <person name="Hayashi K."/>
            <person name="Morooka N."/>
            <person name="Yamamoto Y."/>
            <person name="Fujita K."/>
            <person name="Isono K."/>
            <person name="Choi S."/>
            <person name="Ohtsubo E."/>
            <person name="Baba T."/>
            <person name="Wanner B.L."/>
            <person name="Mori H."/>
            <person name="Horiuchi T."/>
        </authorList>
    </citation>
    <scope>NUCLEOTIDE SEQUENCE [LARGE SCALE GENOMIC DNA]</scope>
    <source>
        <strain>K12 / W3110 / ATCC 27325 / DSM 5911</strain>
    </source>
</reference>
<reference key="5">
    <citation type="journal article" date="1990" name="Biochemistry">
        <title>Electron paramagnetic resonance spectroscopic characterization of dimethyl sulfoxide reductase of Escherichia coli.</title>
        <authorList>
            <person name="Cammack R."/>
            <person name="Weiner J.H."/>
        </authorList>
    </citation>
    <scope>EPR SPECTROSCOPY OF IRON-SULFUR CLUSTERS</scope>
</reference>
<reference key="6">
    <citation type="journal article" date="1991" name="Biochemistry">
        <title>Alteration of the iron-sulfur cluster composition of Escherichia coli dimethyl sulfoxide reductase by site-directed mutagenesis.</title>
        <authorList>
            <person name="Rothery R.A."/>
            <person name="Weiner J.H."/>
        </authorList>
    </citation>
    <scope>MUTAGENESIS</scope>
</reference>
<keyword id="KW-0004">4Fe-4S</keyword>
<keyword id="KW-0903">Direct protein sequencing</keyword>
<keyword id="KW-0249">Electron transport</keyword>
<keyword id="KW-0408">Iron</keyword>
<keyword id="KW-0411">Iron-sulfur</keyword>
<keyword id="KW-0479">Metal-binding</keyword>
<keyword id="KW-1185">Reference proteome</keyword>
<keyword id="KW-0677">Repeat</keyword>
<keyword id="KW-0813">Transport</keyword>
<gene>
    <name type="primary">dmsB</name>
    <name type="ordered locus">b0895</name>
    <name type="ordered locus">JW0878</name>
</gene>
<feature type="initiator methionine" description="Removed" evidence="5">
    <location>
        <position position="1"/>
    </location>
</feature>
<feature type="chain" id="PRO_0000159242" description="Anaerobic dimethyl sulfoxide reductase chain B">
    <location>
        <begin position="2"/>
        <end position="205"/>
    </location>
</feature>
<feature type="domain" description="4Fe-4S ferredoxin-type 1" evidence="2">
    <location>
        <begin position="5"/>
        <end position="33"/>
    </location>
</feature>
<feature type="domain" description="4Fe-4S ferredoxin-type 2" evidence="2">
    <location>
        <begin position="59"/>
        <end position="89"/>
    </location>
</feature>
<feature type="domain" description="4Fe-4S ferredoxin-type 3" evidence="2">
    <location>
        <begin position="90"/>
        <end position="119"/>
    </location>
</feature>
<feature type="region of interest" description="Disordered" evidence="3">
    <location>
        <begin position="184"/>
        <end position="205"/>
    </location>
</feature>
<feature type="compositionally biased region" description="Polar residues" evidence="3">
    <location>
        <begin position="186"/>
        <end position="195"/>
    </location>
</feature>
<feature type="binding site" evidence="1">
    <location>
        <position position="14"/>
    </location>
    <ligand>
        <name>[4Fe-4S] cluster</name>
        <dbReference type="ChEBI" id="CHEBI:49883"/>
        <label>1</label>
    </ligand>
</feature>
<feature type="binding site" evidence="1">
    <location>
        <position position="17"/>
    </location>
    <ligand>
        <name>[4Fe-4S] cluster</name>
        <dbReference type="ChEBI" id="CHEBI:49883"/>
        <label>1</label>
    </ligand>
</feature>
<feature type="binding site" evidence="1">
    <location>
        <position position="20"/>
    </location>
    <ligand>
        <name>[4Fe-4S] cluster</name>
        <dbReference type="ChEBI" id="CHEBI:49883"/>
        <label>1</label>
    </ligand>
</feature>
<feature type="binding site" evidence="1">
    <location>
        <position position="24"/>
    </location>
    <ligand>
        <name>[4Fe-4S] cluster</name>
        <dbReference type="ChEBI" id="CHEBI:49883"/>
        <label>2</label>
    </ligand>
</feature>
<feature type="binding site" evidence="1">
    <location>
        <position position="67"/>
    </location>
    <ligand>
        <name>[4Fe-4S] cluster</name>
        <dbReference type="ChEBI" id="CHEBI:49883"/>
        <label>3</label>
    </ligand>
</feature>
<feature type="binding site" evidence="1">
    <location>
        <position position="70"/>
    </location>
    <ligand>
        <name>[4Fe-4S] cluster</name>
        <dbReference type="ChEBI" id="CHEBI:49883"/>
        <label>3</label>
    </ligand>
</feature>
<feature type="binding site" evidence="1">
    <location>
        <position position="75"/>
    </location>
    <ligand>
        <name>[4Fe-4S] cluster</name>
        <dbReference type="ChEBI" id="CHEBI:49883"/>
        <label>3</label>
    </ligand>
</feature>
<feature type="binding site" evidence="1">
    <location>
        <position position="79"/>
    </location>
    <ligand>
        <name>[4Fe-4S] cluster</name>
        <dbReference type="ChEBI" id="CHEBI:49883"/>
        <label>4</label>
    </ligand>
</feature>
<feature type="binding site" evidence="1">
    <location>
        <position position="99"/>
    </location>
    <ligand>
        <name>[4Fe-4S] cluster</name>
        <dbReference type="ChEBI" id="CHEBI:49883"/>
        <label>4</label>
    </ligand>
</feature>
<feature type="binding site" evidence="1">
    <location>
        <position position="102"/>
    </location>
    <ligand>
        <name>[4Fe-4S] cluster</name>
        <dbReference type="ChEBI" id="CHEBI:49883"/>
        <label>4</label>
    </ligand>
</feature>
<feature type="binding site" evidence="1">
    <location>
        <position position="105"/>
    </location>
    <ligand>
        <name>[4Fe-4S] cluster</name>
        <dbReference type="ChEBI" id="CHEBI:49883"/>
        <label>4</label>
    </ligand>
</feature>
<feature type="binding site" evidence="1">
    <location>
        <position position="109"/>
    </location>
    <ligand>
        <name>[4Fe-4S] cluster</name>
        <dbReference type="ChEBI" id="CHEBI:49883"/>
        <label>3</label>
    </ligand>
</feature>
<feature type="binding site" evidence="1">
    <location>
        <position position="126"/>
    </location>
    <ligand>
        <name>[4Fe-4S] cluster</name>
        <dbReference type="ChEBI" id="CHEBI:49883"/>
        <label>2</label>
    </ligand>
</feature>
<feature type="binding site" evidence="1">
    <location>
        <position position="129"/>
    </location>
    <ligand>
        <name>[4Fe-4S] cluster</name>
        <dbReference type="ChEBI" id="CHEBI:49883"/>
        <label>2</label>
    </ligand>
</feature>
<feature type="binding site" evidence="1">
    <location>
        <position position="141"/>
    </location>
    <ligand>
        <name>[4Fe-4S] cluster</name>
        <dbReference type="ChEBI" id="CHEBI:49883"/>
        <label>2</label>
    </ligand>
</feature>
<feature type="binding site" evidence="1">
    <location>
        <position position="145"/>
    </location>
    <ligand>
        <name>[4Fe-4S] cluster</name>
        <dbReference type="ChEBI" id="CHEBI:49883"/>
        <label>1</label>
    </ligand>
</feature>
<feature type="mutagenesis site" description="Loss of electron transfer from menaquinol to DMSO." evidence="4">
    <original>C</original>
    <variation>F</variation>
    <variation>S</variation>
    <variation>W</variation>
    <variation>Y</variation>
    <location>
        <position position="102"/>
    </location>
</feature>
<feature type="sequence conflict" description="In Ref. 1; AAA83844." evidence="6" ref="1">
    <original>P</original>
    <variation>PRA</variation>
    <location>
        <position position="170"/>
    </location>
</feature>